<gene>
    <name evidence="1" type="primary">cobS</name>
    <name type="ordered locus">M1627_2212</name>
</gene>
<proteinExistence type="inferred from homology"/>
<dbReference type="EC" id="2.7.8.26" evidence="1"/>
<dbReference type="EMBL" id="CP001401">
    <property type="protein sequence ID" value="ACP56075.1"/>
    <property type="molecule type" value="Genomic_DNA"/>
</dbReference>
<dbReference type="RefSeq" id="WP_012712096.1">
    <property type="nucleotide sequence ID" value="NC_012632.1"/>
</dbReference>
<dbReference type="GeneID" id="84059475"/>
<dbReference type="KEGG" id="sim:M1627_2212"/>
<dbReference type="HOGENOM" id="CLU_057426_2_0_2"/>
<dbReference type="UniPathway" id="UPA00148">
    <property type="reaction ID" value="UER00238"/>
</dbReference>
<dbReference type="Proteomes" id="UP000002307">
    <property type="component" value="Chromosome"/>
</dbReference>
<dbReference type="GO" id="GO:0005886">
    <property type="term" value="C:plasma membrane"/>
    <property type="evidence" value="ECO:0007669"/>
    <property type="project" value="UniProtKB-SubCell"/>
</dbReference>
<dbReference type="GO" id="GO:0051073">
    <property type="term" value="F:adenosylcobinamide-GDP ribazoletransferase activity"/>
    <property type="evidence" value="ECO:0007669"/>
    <property type="project" value="UniProtKB-UniRule"/>
</dbReference>
<dbReference type="GO" id="GO:0008818">
    <property type="term" value="F:cobalamin 5'-phosphate synthase activity"/>
    <property type="evidence" value="ECO:0007669"/>
    <property type="project" value="UniProtKB-UniRule"/>
</dbReference>
<dbReference type="GO" id="GO:0009236">
    <property type="term" value="P:cobalamin biosynthetic process"/>
    <property type="evidence" value="ECO:0007669"/>
    <property type="project" value="UniProtKB-UniRule"/>
</dbReference>
<dbReference type="HAMAP" id="MF_00719">
    <property type="entry name" value="CobS"/>
    <property type="match status" value="1"/>
</dbReference>
<dbReference type="InterPro" id="IPR003805">
    <property type="entry name" value="CobS"/>
</dbReference>
<dbReference type="NCBIfam" id="TIGR00317">
    <property type="entry name" value="cobS"/>
    <property type="match status" value="1"/>
</dbReference>
<dbReference type="PANTHER" id="PTHR34148">
    <property type="entry name" value="ADENOSYLCOBINAMIDE-GDP RIBAZOLETRANSFERASE"/>
    <property type="match status" value="1"/>
</dbReference>
<dbReference type="PANTHER" id="PTHR34148:SF1">
    <property type="entry name" value="ADENOSYLCOBINAMIDE-GDP RIBAZOLETRANSFERASE"/>
    <property type="match status" value="1"/>
</dbReference>
<dbReference type="Pfam" id="PF02654">
    <property type="entry name" value="CobS"/>
    <property type="match status" value="1"/>
</dbReference>
<evidence type="ECO:0000255" key="1">
    <source>
        <dbReference type="HAMAP-Rule" id="MF_00719"/>
    </source>
</evidence>
<sequence length="253" mass="27927">MRLKGVLALFSFFTAIPIKSNASLEEIAEYSYISPLIIGISLALIESAVYVLLYRILEALAGIVLLGVVELLRGFNHLDGLLDLGDALMIKGDRERKIKALKDVEIGSGGIGLLLVYLSIQIVALLKLGFSFYTIFYLISSNVLSMTIGLYILSTISPIPESNLGKIFHNKLKGKSTVLLFELIPFISLYNIIVFLVFYMIMHKICRSLGGSSGDIAGASITLSFPLFLLTNEITNLNYSLLSILCYLFLYLH</sequence>
<protein>
    <recommendedName>
        <fullName evidence="1">Adenosylcobinamide-GDP ribazoletransferase</fullName>
        <ecNumber evidence="1">2.7.8.26</ecNumber>
    </recommendedName>
    <alternativeName>
        <fullName evidence="1">Cobalamin synthase</fullName>
    </alternativeName>
    <alternativeName>
        <fullName evidence="1">Cobalamin-5'-phosphate synthase</fullName>
    </alternativeName>
</protein>
<accession>C3N0R7</accession>
<name>COBS_SACI3</name>
<comment type="function">
    <text evidence="1">Joins adenosylcobinamide-GDP and alpha-ribazole to generate adenosylcobalamin (Ado-cobalamin). Also synthesizes adenosylcobalamin 5'-phosphate from adenosylcobinamide-GDP and alpha-ribazole 5'-phosphate.</text>
</comment>
<comment type="catalytic activity">
    <reaction evidence="1">
        <text>alpha-ribazole + adenosylcob(III)inamide-GDP = adenosylcob(III)alamin + GMP + H(+)</text>
        <dbReference type="Rhea" id="RHEA:16049"/>
        <dbReference type="ChEBI" id="CHEBI:10329"/>
        <dbReference type="ChEBI" id="CHEBI:15378"/>
        <dbReference type="ChEBI" id="CHEBI:18408"/>
        <dbReference type="ChEBI" id="CHEBI:58115"/>
        <dbReference type="ChEBI" id="CHEBI:60487"/>
        <dbReference type="EC" id="2.7.8.26"/>
    </reaction>
</comment>
<comment type="catalytic activity">
    <reaction evidence="1">
        <text>alpha-ribazole 5'-phosphate + adenosylcob(III)inamide-GDP = adenosylcob(III)alamin 5'-phosphate + GMP + H(+)</text>
        <dbReference type="Rhea" id="RHEA:23560"/>
        <dbReference type="ChEBI" id="CHEBI:15378"/>
        <dbReference type="ChEBI" id="CHEBI:57918"/>
        <dbReference type="ChEBI" id="CHEBI:58115"/>
        <dbReference type="ChEBI" id="CHEBI:60487"/>
        <dbReference type="ChEBI" id="CHEBI:60493"/>
        <dbReference type="EC" id="2.7.8.26"/>
    </reaction>
</comment>
<comment type="cofactor">
    <cofactor evidence="1">
        <name>Mg(2+)</name>
        <dbReference type="ChEBI" id="CHEBI:18420"/>
    </cofactor>
</comment>
<comment type="pathway">
    <text evidence="1">Cofactor biosynthesis; adenosylcobalamin biosynthesis; adenosylcobalamin from cob(II)yrinate a,c-diamide: step 7/7.</text>
</comment>
<comment type="subcellular location">
    <subcellularLocation>
        <location evidence="1">Cell membrane</location>
        <topology evidence="1">Multi-pass membrane protein</topology>
    </subcellularLocation>
</comment>
<comment type="similarity">
    <text evidence="1">Belongs to the CobS family.</text>
</comment>
<reference key="1">
    <citation type="journal article" date="2009" name="Proc. Natl. Acad. Sci. U.S.A.">
        <title>Biogeography of the Sulfolobus islandicus pan-genome.</title>
        <authorList>
            <person name="Reno M.L."/>
            <person name="Held N.L."/>
            <person name="Fields C.J."/>
            <person name="Burke P.V."/>
            <person name="Whitaker R.J."/>
        </authorList>
    </citation>
    <scope>NUCLEOTIDE SEQUENCE [LARGE SCALE GENOMIC DNA]</scope>
    <source>
        <strain>M.16.27</strain>
    </source>
</reference>
<feature type="chain" id="PRO_1000212696" description="Adenosylcobinamide-GDP ribazoletransferase">
    <location>
        <begin position="1"/>
        <end position="253"/>
    </location>
</feature>
<feature type="transmembrane region" description="Helical" evidence="1">
    <location>
        <begin position="33"/>
        <end position="53"/>
    </location>
</feature>
<feature type="transmembrane region" description="Helical" evidence="1">
    <location>
        <begin position="56"/>
        <end position="76"/>
    </location>
</feature>
<feature type="transmembrane region" description="Helical" evidence="1">
    <location>
        <begin position="106"/>
        <end position="126"/>
    </location>
</feature>
<feature type="transmembrane region" description="Helical" evidence="1">
    <location>
        <begin position="132"/>
        <end position="152"/>
    </location>
</feature>
<feature type="transmembrane region" description="Helical" evidence="1">
    <location>
        <begin position="178"/>
        <end position="198"/>
    </location>
</feature>
<feature type="transmembrane region" description="Helical" evidence="1">
    <location>
        <begin position="209"/>
        <end position="229"/>
    </location>
</feature>
<feature type="transmembrane region" description="Helical" evidence="1">
    <location>
        <begin position="233"/>
        <end position="253"/>
    </location>
</feature>
<keyword id="KW-1003">Cell membrane</keyword>
<keyword id="KW-0169">Cobalamin biosynthesis</keyword>
<keyword id="KW-0460">Magnesium</keyword>
<keyword id="KW-0472">Membrane</keyword>
<keyword id="KW-0808">Transferase</keyword>
<keyword id="KW-0812">Transmembrane</keyword>
<keyword id="KW-1133">Transmembrane helix</keyword>
<organism>
    <name type="scientific">Saccharolobus islandicus (strain M.16.27)</name>
    <name type="common">Sulfolobus islandicus</name>
    <dbReference type="NCBI Taxonomy" id="427318"/>
    <lineage>
        <taxon>Archaea</taxon>
        <taxon>Thermoproteota</taxon>
        <taxon>Thermoprotei</taxon>
        <taxon>Sulfolobales</taxon>
        <taxon>Sulfolobaceae</taxon>
        <taxon>Saccharolobus</taxon>
    </lineage>
</organism>